<feature type="chain" id="PRO_0000437049" description="Atrochrysone carboxylic acid synthase">
    <location>
        <begin position="1"/>
        <end position="1806"/>
    </location>
</feature>
<feature type="domain" description="Ketosynthase family 3 (KS3)" evidence="5">
    <location>
        <begin position="416"/>
        <end position="850"/>
    </location>
</feature>
<feature type="domain" description="PKS/mFAS DH" evidence="6">
    <location>
        <begin position="1344"/>
        <end position="1654"/>
    </location>
</feature>
<feature type="domain" description="Carrier" evidence="4">
    <location>
        <begin position="1728"/>
        <end position="1805"/>
    </location>
</feature>
<feature type="region of interest" description="N-terminal acylcarrier protein transacylase domain (SAT)" evidence="3">
    <location>
        <begin position="30"/>
        <end position="283"/>
    </location>
</feature>
<feature type="region of interest" description="Malonyl-CoA:ACP transacylase (MAT) domain" evidence="3">
    <location>
        <begin position="951"/>
        <end position="1270"/>
    </location>
</feature>
<feature type="region of interest" description="Product template (PT) domain" evidence="3">
    <location>
        <begin position="1340"/>
        <end position="1659"/>
    </location>
</feature>
<feature type="region of interest" description="N-terminal hotdog fold" evidence="6">
    <location>
        <begin position="1344"/>
        <end position="1479"/>
    </location>
</feature>
<feature type="region of interest" description="C-terminal hotdog fold" evidence="6">
    <location>
        <begin position="1506"/>
        <end position="1654"/>
    </location>
</feature>
<feature type="region of interest" description="Disordered" evidence="7">
    <location>
        <begin position="1668"/>
        <end position="1726"/>
    </location>
</feature>
<feature type="compositionally biased region" description="Low complexity" evidence="7">
    <location>
        <begin position="1685"/>
        <end position="1708"/>
    </location>
</feature>
<feature type="compositionally biased region" description="Pro residues" evidence="7">
    <location>
        <begin position="1709"/>
        <end position="1721"/>
    </location>
</feature>
<feature type="active site" description="For beta-ketoacyl synthase activity" evidence="5">
    <location>
        <position position="589"/>
    </location>
</feature>
<feature type="active site" description="For beta-ketoacyl synthase activity" evidence="5">
    <location>
        <position position="725"/>
    </location>
</feature>
<feature type="active site" description="For beta-ketoacyl synthase activity" evidence="5">
    <location>
        <position position="768"/>
    </location>
</feature>
<feature type="active site" description="Proton acceptor; for dehydratase activity" evidence="6">
    <location>
        <position position="1376"/>
    </location>
</feature>
<feature type="active site" description="Proton donor; for dehydratase activity" evidence="6">
    <location>
        <position position="1565"/>
    </location>
</feature>
<feature type="modified residue" description="O-(pantetheine 4'-phosphoryl)serine" evidence="4">
    <location>
        <position position="1765"/>
    </location>
</feature>
<protein>
    <recommendedName>
        <fullName evidence="13">Atrochrysone carboxylic acid synthase</fullName>
        <shortName evidence="13">ACAS</shortName>
        <ecNumber evidence="14">2.3.1.-</ecNumber>
    </recommendedName>
    <alternativeName>
        <fullName evidence="13">Monodictyphenone synthesis protein G</fullName>
    </alternativeName>
    <alternativeName>
        <fullName evidence="13">Non-reducing polyketide synthase mdpG</fullName>
    </alternativeName>
</protein>
<comment type="function">
    <text evidence="1 8 9 10 11 12">Atrochrysone carboxylic acid synthase; part of the gene cluster that mediates the biosynthesis of monodictyphenone, a prenyl xanthone derivative (PubMed:20139316, PubMed:21351751). The pathway begins with the synthesis of atrochrysone thioester by the polyketide synthase (PKS) mdpG (PubMed:20139316). The atrochrysone carboxyl ACP thioesterase mdpF then breaks the thioester bond and releases the atrochrysone carboxylic acid from mdpG (PubMed:20139316). The atrochrysone carboxylic acid is then converted to atrochrysone which is further transformed into emodin anthrone (PubMed:20139316). The next step is performed by the anthrone oxygenase mdpH that catalyzes the oxidation of emodinanthrone to emodin (By similarity). Emodin is further modified to yield monodictyphenone via several steps involving mdpB, mdpC mdpJ, mdpK and mdpL (PubMed:20139316, PubMed:21351751, PubMed:22909031). The short chain dehydrogenase mdpC converts the tautomers of emodin hydroquinone into the 3-hydroxy-3,4-dihydroan-thracen-1(2H)-one derivative (PubMed:22909031, PubMed:26266881). These enzymes with xptA, xptB and xptC are also proposed to be involved in the synthesis of shamixanthone from emodin (PubMed:22730213). Especially, direct reduction of emodin by the short chain dehydrogenase mdpC followed by dehydration catalyzed by the scytalone dehydratase-like protein mdpB gives loss of oxygen and formation of chrysophanol intermediate in two simple steps (PubMed:22730213).</text>
</comment>
<comment type="catalytic activity">
    <reaction evidence="14">
        <text>holo-[ACP] + 8 malonyl-CoA + 8 H(+) = atrochrysone carboxyl-[ACP] + 8 CO2 + 8 CoA + 2 H2O</text>
        <dbReference type="Rhea" id="RHEA:64232"/>
        <dbReference type="Rhea" id="RHEA-COMP:9685"/>
        <dbReference type="Rhea" id="RHEA-COMP:16552"/>
        <dbReference type="ChEBI" id="CHEBI:15377"/>
        <dbReference type="ChEBI" id="CHEBI:15378"/>
        <dbReference type="ChEBI" id="CHEBI:16526"/>
        <dbReference type="ChEBI" id="CHEBI:57287"/>
        <dbReference type="ChEBI" id="CHEBI:57384"/>
        <dbReference type="ChEBI" id="CHEBI:64479"/>
        <dbReference type="ChEBI" id="CHEBI:149712"/>
    </reaction>
    <physiologicalReaction direction="left-to-right" evidence="14">
        <dbReference type="Rhea" id="RHEA:64233"/>
    </physiologicalReaction>
</comment>
<comment type="pathway">
    <text evidence="8 9">Secondary metabolite biosynthesis.</text>
</comment>
<comment type="domain">
    <text evidence="2">Multidomain protein; including a starter unit:ACP transacylase (SAT) that selects the starter unit; a ketosynthase (KS) that catalyzes repeated decarboxylative condensation to elongate the polyketide backbone; a malonyl-CoA:ACP transacylase (MAT) that selects and transfers the extender unit malonyl-CoA; a product template (PT) domain that controls the immediate cyclization regioselectivity of the reactive polyketide backbone; and an acyl-carrier protein (ACP) that serves as the tether of the growing and completed polyketide via its phosphopantetheinyl arm (By similarity).</text>
</comment>
<comment type="disruption phenotype">
    <text evidence="8 9">Impairs the production of monodictyphenone and any of the intermediates of the pathway (PubMed:20139316, PubMed:21351751).</text>
</comment>
<name>MDPG_EMENI</name>
<proteinExistence type="inferred from homology"/>
<evidence type="ECO:0000250" key="1">
    <source>
        <dbReference type="UniProtKB" id="Q0CCY3"/>
    </source>
</evidence>
<evidence type="ECO:0000250" key="2">
    <source>
        <dbReference type="UniProtKB" id="Q5B0D0"/>
    </source>
</evidence>
<evidence type="ECO:0000255" key="3"/>
<evidence type="ECO:0000255" key="4">
    <source>
        <dbReference type="PROSITE-ProRule" id="PRU00258"/>
    </source>
</evidence>
<evidence type="ECO:0000255" key="5">
    <source>
        <dbReference type="PROSITE-ProRule" id="PRU01348"/>
    </source>
</evidence>
<evidence type="ECO:0000255" key="6">
    <source>
        <dbReference type="PROSITE-ProRule" id="PRU01363"/>
    </source>
</evidence>
<evidence type="ECO:0000256" key="7">
    <source>
        <dbReference type="SAM" id="MobiDB-lite"/>
    </source>
</evidence>
<evidence type="ECO:0000269" key="8">
    <source>
    </source>
</evidence>
<evidence type="ECO:0000269" key="9">
    <source>
    </source>
</evidence>
<evidence type="ECO:0000269" key="10">
    <source>
    </source>
</evidence>
<evidence type="ECO:0000269" key="11">
    <source>
    </source>
</evidence>
<evidence type="ECO:0000269" key="12">
    <source>
    </source>
</evidence>
<evidence type="ECO:0000303" key="13">
    <source>
    </source>
</evidence>
<evidence type="ECO:0000305" key="14">
    <source>
    </source>
</evidence>
<keyword id="KW-0511">Multifunctional enzyme</keyword>
<keyword id="KW-0596">Phosphopantetheine</keyword>
<keyword id="KW-0597">Phosphoprotein</keyword>
<keyword id="KW-1185">Reference proteome</keyword>
<keyword id="KW-0808">Transferase</keyword>
<gene>
    <name evidence="13" type="primary">mdpG</name>
    <name type="ORF">AN0150</name>
</gene>
<reference key="1">
    <citation type="journal article" date="2005" name="Nature">
        <title>Sequencing of Aspergillus nidulans and comparative analysis with A. fumigatus and A. oryzae.</title>
        <authorList>
            <person name="Galagan J.E."/>
            <person name="Calvo S.E."/>
            <person name="Cuomo C."/>
            <person name="Ma L.-J."/>
            <person name="Wortman J.R."/>
            <person name="Batzoglou S."/>
            <person name="Lee S.-I."/>
            <person name="Bastuerkmen M."/>
            <person name="Spevak C.C."/>
            <person name="Clutterbuck J."/>
            <person name="Kapitonov V."/>
            <person name="Jurka J."/>
            <person name="Scazzocchio C."/>
            <person name="Farman M.L."/>
            <person name="Butler J."/>
            <person name="Purcell S."/>
            <person name="Harris S."/>
            <person name="Braus G.H."/>
            <person name="Draht O."/>
            <person name="Busch S."/>
            <person name="D'Enfert C."/>
            <person name="Bouchier C."/>
            <person name="Goldman G.H."/>
            <person name="Bell-Pedersen D."/>
            <person name="Griffiths-Jones S."/>
            <person name="Doonan J.H."/>
            <person name="Yu J."/>
            <person name="Vienken K."/>
            <person name="Pain A."/>
            <person name="Freitag M."/>
            <person name="Selker E.U."/>
            <person name="Archer D.B."/>
            <person name="Penalva M.A."/>
            <person name="Oakley B.R."/>
            <person name="Momany M."/>
            <person name="Tanaka T."/>
            <person name="Kumagai T."/>
            <person name="Asai K."/>
            <person name="Machida M."/>
            <person name="Nierman W.C."/>
            <person name="Denning D.W."/>
            <person name="Caddick M.X."/>
            <person name="Hynes M."/>
            <person name="Paoletti M."/>
            <person name="Fischer R."/>
            <person name="Miller B.L."/>
            <person name="Dyer P.S."/>
            <person name="Sachs M.S."/>
            <person name="Osmani S.A."/>
            <person name="Birren B.W."/>
        </authorList>
    </citation>
    <scope>NUCLEOTIDE SEQUENCE [LARGE SCALE GENOMIC DNA]</scope>
    <source>
        <strain>FGSC A4 / ATCC 38163 / CBS 112.46 / NRRL 194 / M139</strain>
    </source>
</reference>
<reference key="2">
    <citation type="journal article" date="2009" name="Fungal Genet. Biol.">
        <title>The 2008 update of the Aspergillus nidulans genome annotation: a community effort.</title>
        <authorList>
            <person name="Wortman J.R."/>
            <person name="Gilsenan J.M."/>
            <person name="Joardar V."/>
            <person name="Deegan J."/>
            <person name="Clutterbuck J."/>
            <person name="Andersen M.R."/>
            <person name="Archer D."/>
            <person name="Bencina M."/>
            <person name="Braus G."/>
            <person name="Coutinho P."/>
            <person name="von Dohren H."/>
            <person name="Doonan J."/>
            <person name="Driessen A.J."/>
            <person name="Durek P."/>
            <person name="Espeso E."/>
            <person name="Fekete E."/>
            <person name="Flipphi M."/>
            <person name="Estrada C.G."/>
            <person name="Geysens S."/>
            <person name="Goldman G."/>
            <person name="de Groot P.W."/>
            <person name="Hansen K."/>
            <person name="Harris S.D."/>
            <person name="Heinekamp T."/>
            <person name="Helmstaedt K."/>
            <person name="Henrissat B."/>
            <person name="Hofmann G."/>
            <person name="Homan T."/>
            <person name="Horio T."/>
            <person name="Horiuchi H."/>
            <person name="James S."/>
            <person name="Jones M."/>
            <person name="Karaffa L."/>
            <person name="Karanyi Z."/>
            <person name="Kato M."/>
            <person name="Keller N."/>
            <person name="Kelly D.E."/>
            <person name="Kiel J.A."/>
            <person name="Kim J.M."/>
            <person name="van der Klei I.J."/>
            <person name="Klis F.M."/>
            <person name="Kovalchuk A."/>
            <person name="Krasevec N."/>
            <person name="Kubicek C.P."/>
            <person name="Liu B."/>
            <person name="Maccabe A."/>
            <person name="Meyer V."/>
            <person name="Mirabito P."/>
            <person name="Miskei M."/>
            <person name="Mos M."/>
            <person name="Mullins J."/>
            <person name="Nelson D.R."/>
            <person name="Nielsen J."/>
            <person name="Oakley B.R."/>
            <person name="Osmani S.A."/>
            <person name="Pakula T."/>
            <person name="Paszewski A."/>
            <person name="Paulsen I."/>
            <person name="Pilsyk S."/>
            <person name="Pocsi I."/>
            <person name="Punt P.J."/>
            <person name="Ram A.F."/>
            <person name="Ren Q."/>
            <person name="Robellet X."/>
            <person name="Robson G."/>
            <person name="Seiboth B."/>
            <person name="van Solingen P."/>
            <person name="Specht T."/>
            <person name="Sun J."/>
            <person name="Taheri-Talesh N."/>
            <person name="Takeshita N."/>
            <person name="Ussery D."/>
            <person name="vanKuyk P.A."/>
            <person name="Visser H."/>
            <person name="van de Vondervoort P.J."/>
            <person name="de Vries R.P."/>
            <person name="Walton J."/>
            <person name="Xiang X."/>
            <person name="Xiong Y."/>
            <person name="Zeng A.P."/>
            <person name="Brandt B.W."/>
            <person name="Cornell M.J."/>
            <person name="van den Hondel C.A."/>
            <person name="Visser J."/>
            <person name="Oliver S.G."/>
            <person name="Turner G."/>
        </authorList>
    </citation>
    <scope>GENOME REANNOTATION</scope>
    <source>
        <strain>FGSC A4 / ATCC 38163 / CBS 112.46 / NRRL 194 / M139</strain>
    </source>
</reference>
<reference key="3">
    <citation type="journal article" date="2010" name="Appl. Environ. Microbiol.">
        <title>Characterization of the Aspergillus nidulans monodictyphenone gene cluster.</title>
        <authorList>
            <person name="Chiang Y.M."/>
            <person name="Szewczyk E."/>
            <person name="Davidson A.D."/>
            <person name="Entwistle R."/>
            <person name="Keller N.P."/>
            <person name="Wang C.C."/>
            <person name="Oakley B.R."/>
        </authorList>
    </citation>
    <scope>FUNCTION</scope>
    <scope>DISRUPTION PHENOTYPE</scope>
    <scope>PATHWAY</scope>
</reference>
<reference key="4">
    <citation type="journal article" date="2011" name="J. Am. Chem. Soc.">
        <title>Genome-based deletion analysis reveals the prenyl xanthone biosynthesis pathway in Aspergillus nidulans.</title>
        <authorList>
            <person name="Sanchez J.F."/>
            <person name="Entwistle R."/>
            <person name="Hung J.H."/>
            <person name="Yaegashi J."/>
            <person name="Jain S."/>
            <person name="Chiang Y.M."/>
            <person name="Wang C.C."/>
            <person name="Oakley B.R."/>
        </authorList>
    </citation>
    <scope>FUNCTION</scope>
    <scope>DISRUPTION PHENOTYPE</scope>
    <scope>PATHWAY</scope>
</reference>
<reference key="5">
    <citation type="journal article" date="2012" name="ChemBioChem">
        <title>Genetic and biosynthetic studies of the fungal prenylated xanthone shamixanthone and related metabolites in Aspergillus spp. revisited.</title>
        <authorList>
            <person name="Simpson T.J."/>
        </authorList>
    </citation>
    <scope>FUNCTION</scope>
</reference>
<reference key="6">
    <citation type="journal article" date="2012" name="J. Am. Chem. Soc.">
        <title>Tautomers of anthrahydroquinones: enzymatic reduction and implications for chrysophanol, monodictyphenone, and related xanthone biosyntheses.</title>
        <authorList>
            <person name="Schaetzle M.A."/>
            <person name="Husain S.M."/>
            <person name="Ferlaino S."/>
            <person name="Mueller M."/>
        </authorList>
    </citation>
    <scope>FUNCTION</scope>
</reference>
<reference key="7">
    <citation type="journal article" date="2015" name="J. Am. Chem. Soc.">
        <title>New insights into the conversion of versicolorin A in the biosynthesis of aflatoxin B1.</title>
        <authorList>
            <person name="Conradt D."/>
            <person name="Schaetzle M.A."/>
            <person name="Haas J."/>
            <person name="Townsend C.A."/>
            <person name="Mueller M."/>
        </authorList>
    </citation>
    <scope>FUNCTION</scope>
</reference>
<sequence>MPVYTPQSGSLPEYSKMKLLYFSNELPKDDLQGLFRRLYNHSKDRRYPLLARFIHEATLAVREEVRQLPTAVKALVPAFETVLNLADYPELRKGPLGGSLEGVLLCVLEIATLIGHVPRLYFKEAADCCSYYENASERFDLHAVSTYLAGLGLGLLSTAAVALCSALADVPVIGAEVVRVSFRLGTLVDEISQNLEPRDTSGSPDTWASVVPGAKVEEVQAELDAIHAREKTPQPSKIFISAWNEGSVTISGPPSRIRRVLRLSEFFRRHRVVSLPVYSGLCHAKHLYNEQHAREIISTRSMDSINALYSPAIPVYQTSTGRPFTASTAKGLFEQLVLELLTQPILWDNVVQGVVDQAYATSATSCDVLVFRISVPINDLRTALGSKLQGFETSTEELIPWILQKSDMEIPRGTAQSKIAIIGMSCRMPGGATDTEKFWELLEQGLDVARKIPADRFDVETHYDPKGKRVNTSHTPYGCFIDEPGLFDAPFFNMSPREAQQTDPMQRLAIVTAYEALERAGYVANRTPATNLHRIGTFYGQASDDYREVNTAQEISTYFIPGGCRAFGPGRINYFFKFSGPSFSCDTACSSSLATIQAACTSLWNGDTDMVVAGGMNVLTNSDAFAGLSHGHFLSKTPGACKTWDVNADGYCRADGIGSIVMKRLEDAEADNDNIIGIIRAAATNHSAEAISITHPHAGAQAYLYRQVMSSAGIDPLDVSFVEMHGTGTQAGDSVEITSITDIFAPITKRRSAQQPLHIGAVKANVGHGEAVAGVTALLKVLLMYQKNAIPPHVGIKNSLNPLFPKDLDKRNLHIPYQKVPWPRVKGKKRYAVVNNFSAAGGNTTVCLEEPPLRETDYVDPRTAHVVNVSAKSKISFKKNLERLVAYLDANPDTSLASLSYTTTARRYHHNHRASVAATDIAQVKKKLLSYIDKVEAHKPIPATGPPQVAFAFTGQGASYKSMNLELFHHSPYFRSQLLHLDALAQGQGFPSFIPAVDGSHEKDYAHSPVVTQLALVSVEIALAKYWISLGVKPNAVVGHSLGEYAAFHVAGVLSASDALFLVGRRAQLLEEKCQIGSHKMLAVRAPLADIEKALEGTNYEVACINGPKETVLSGSQAQVEVVSEILQSVGYRCTSLDVAFAFHSSQTEAILDDFEEAAKDGVLFRAPNMPVISPLLGKVIFDDKTITAKYMRRATRETVNFLSALEMAQTFSTVDEETVWVEIGPHPVCMGFVNATLPAVNETVASMKRGEDNWVTLCNSLTALHCAGVPIEWNEYQRPFEKGLRLLDLPTYAWNDKTYWIQYNGDWALTKGNTFYDAEKSLKAQQTGQLASVPSGLRTSTVQQIIEESFNGSAGKVVMQSDMMQPDFLDAAHGHKMNGCGVVTSSIHGDIGFTLGGYLYKNLVKGGKAPDMNMANLVVLRGLVAQKNTKKPQYIRVTISTTDINSGVAELIWQNVLNDNTADEPFASASILYDDAALWLKSWIPSTHLVQGRIEALERLAEDGIANRFTRNMAYLLFANNLVDYAQKYRGMQSVVLHELEAFADITLSTEKSGTWTIPPYFIDSVAHLAGFVMNVSDAIDTKANYCVTPGWKSLRFAKPLVAGAKYRSYVKMIQTEEDPTVYLGDVYIMQDGAIIGMCGGIQFRRYPRILLNRFFTAPEEAGAISHAAASSTPAPRTKPEPVPVATPATAAAPVAQSPAAPASVTPAPAPAPAPGPTPAAAPAAAGESDSVAAKALVLIAKEAALELSDLTDDASFANLGVDSLMSLVIAEKFREELGVTVTGSLFLEYPTIGDLRSWLLEYYN</sequence>
<accession>Q5BH30</accession>
<accession>C8VQ66</accession>
<organism>
    <name type="scientific">Emericella nidulans (strain FGSC A4 / ATCC 38163 / CBS 112.46 / NRRL 194 / M139)</name>
    <name type="common">Aspergillus nidulans</name>
    <dbReference type="NCBI Taxonomy" id="227321"/>
    <lineage>
        <taxon>Eukaryota</taxon>
        <taxon>Fungi</taxon>
        <taxon>Dikarya</taxon>
        <taxon>Ascomycota</taxon>
        <taxon>Pezizomycotina</taxon>
        <taxon>Eurotiomycetes</taxon>
        <taxon>Eurotiomycetidae</taxon>
        <taxon>Eurotiales</taxon>
        <taxon>Aspergillaceae</taxon>
        <taxon>Aspergillus</taxon>
        <taxon>Aspergillus subgen. Nidulantes</taxon>
    </lineage>
</organism>
<dbReference type="EC" id="2.3.1.-" evidence="14"/>
<dbReference type="EMBL" id="BN001308">
    <property type="protein sequence ID" value="CBF90097.1"/>
    <property type="molecule type" value="Genomic_DNA"/>
</dbReference>
<dbReference type="EMBL" id="AACD01000005">
    <property type="protein sequence ID" value="EAA66023.1"/>
    <property type="molecule type" value="Genomic_DNA"/>
</dbReference>
<dbReference type="RefSeq" id="XP_657754.1">
    <property type="nucleotide sequence ID" value="XM_652662.1"/>
</dbReference>
<dbReference type="SMR" id="Q5BH30"/>
<dbReference type="STRING" id="227321.Q5BH30"/>
<dbReference type="EnsemblFungi" id="CBF90097">
    <property type="protein sequence ID" value="CBF90097"/>
    <property type="gene ID" value="ANIA_00150"/>
</dbReference>
<dbReference type="KEGG" id="ani:ANIA_00150"/>
<dbReference type="VEuPathDB" id="FungiDB:AN0150"/>
<dbReference type="eggNOG" id="KOG1202">
    <property type="taxonomic scope" value="Eukaryota"/>
</dbReference>
<dbReference type="HOGENOM" id="CLU_000022_6_1_1"/>
<dbReference type="InParanoid" id="Q5BH30"/>
<dbReference type="OMA" id="AAYGHKM"/>
<dbReference type="OrthoDB" id="329835at2759"/>
<dbReference type="Proteomes" id="UP000000560">
    <property type="component" value="Chromosome VIII"/>
</dbReference>
<dbReference type="GO" id="GO:0004312">
    <property type="term" value="F:fatty acid synthase activity"/>
    <property type="evidence" value="ECO:0000318"/>
    <property type="project" value="GO_Central"/>
</dbReference>
<dbReference type="GO" id="GO:0031177">
    <property type="term" value="F:phosphopantetheine binding"/>
    <property type="evidence" value="ECO:0007669"/>
    <property type="project" value="InterPro"/>
</dbReference>
<dbReference type="GO" id="GO:1900587">
    <property type="term" value="P:arugosin biosynthetic process"/>
    <property type="evidence" value="ECO:0000315"/>
    <property type="project" value="AspGD"/>
</dbReference>
<dbReference type="GO" id="GO:1900575">
    <property type="term" value="P:emodin biosynthetic process"/>
    <property type="evidence" value="ECO:0000315"/>
    <property type="project" value="AspGD"/>
</dbReference>
<dbReference type="GO" id="GO:0006633">
    <property type="term" value="P:fatty acid biosynthetic process"/>
    <property type="evidence" value="ECO:0000318"/>
    <property type="project" value="GO_Central"/>
</dbReference>
<dbReference type="GO" id="GO:1900815">
    <property type="term" value="P:monodictyphenone biosynthetic process"/>
    <property type="evidence" value="ECO:0000315"/>
    <property type="project" value="AspGD"/>
</dbReference>
<dbReference type="GO" id="GO:1900813">
    <property type="term" value="P:monodictyphenone metabolic process"/>
    <property type="evidence" value="ECO:0000315"/>
    <property type="project" value="AspGD"/>
</dbReference>
<dbReference type="GO" id="GO:1900584">
    <property type="term" value="P:o-orsellinic acid biosynthetic process"/>
    <property type="evidence" value="ECO:0000315"/>
    <property type="project" value="AspGD"/>
</dbReference>
<dbReference type="GO" id="GO:0019748">
    <property type="term" value="P:secondary metabolic process"/>
    <property type="evidence" value="ECO:0000303"/>
    <property type="project" value="AspGD"/>
</dbReference>
<dbReference type="GO" id="GO:0044550">
    <property type="term" value="P:secondary metabolite biosynthetic process"/>
    <property type="evidence" value="ECO:0000315"/>
    <property type="project" value="AspGD"/>
</dbReference>
<dbReference type="GO" id="GO:1900793">
    <property type="term" value="P:shamixanthone biosynthetic process"/>
    <property type="evidence" value="ECO:0000315"/>
    <property type="project" value="AspGD"/>
</dbReference>
<dbReference type="GO" id="GO:0045461">
    <property type="term" value="P:sterigmatocystin biosynthetic process"/>
    <property type="evidence" value="ECO:0000315"/>
    <property type="project" value="AspGD"/>
</dbReference>
<dbReference type="CDD" id="cd00833">
    <property type="entry name" value="PKS"/>
    <property type="match status" value="1"/>
</dbReference>
<dbReference type="FunFam" id="3.40.366.10:FF:000017">
    <property type="entry name" value="Non-reducing polyketide synthase aptA"/>
    <property type="match status" value="1"/>
</dbReference>
<dbReference type="FunFam" id="3.40.366.10:FF:000002">
    <property type="entry name" value="Probable polyketide synthase 2"/>
    <property type="match status" value="1"/>
</dbReference>
<dbReference type="FunFam" id="1.10.1200.10:FF:000011">
    <property type="entry name" value="Sterigmatocystin biosynthesis polyketide synthase"/>
    <property type="match status" value="1"/>
</dbReference>
<dbReference type="FunFam" id="3.10.129.110:FF:000001">
    <property type="entry name" value="Sterigmatocystin biosynthesis polyketide synthase"/>
    <property type="match status" value="1"/>
</dbReference>
<dbReference type="FunFam" id="3.40.47.10:FF:000031">
    <property type="entry name" value="Sterigmatocystin biosynthesis polyketide synthase"/>
    <property type="match status" value="1"/>
</dbReference>
<dbReference type="Gene3D" id="3.30.70.3290">
    <property type="match status" value="1"/>
</dbReference>
<dbReference type="Gene3D" id="3.40.47.10">
    <property type="match status" value="1"/>
</dbReference>
<dbReference type="Gene3D" id="1.10.1200.10">
    <property type="entry name" value="ACP-like"/>
    <property type="match status" value="1"/>
</dbReference>
<dbReference type="Gene3D" id="3.30.70.250">
    <property type="entry name" value="Malonyl-CoA ACP transacylase, ACP-binding"/>
    <property type="match status" value="1"/>
</dbReference>
<dbReference type="Gene3D" id="3.40.366.10">
    <property type="entry name" value="Malonyl-Coenzyme A Acyl Carrier Protein, domain 2"/>
    <property type="match status" value="2"/>
</dbReference>
<dbReference type="Gene3D" id="3.10.129.110">
    <property type="entry name" value="Polyketide synthase dehydratase"/>
    <property type="match status" value="1"/>
</dbReference>
<dbReference type="InterPro" id="IPR001227">
    <property type="entry name" value="Ac_transferase_dom_sf"/>
</dbReference>
<dbReference type="InterPro" id="IPR036736">
    <property type="entry name" value="ACP-like_sf"/>
</dbReference>
<dbReference type="InterPro" id="IPR014043">
    <property type="entry name" value="Acyl_transferase_dom"/>
</dbReference>
<dbReference type="InterPro" id="IPR016035">
    <property type="entry name" value="Acyl_Trfase/lysoPLipase"/>
</dbReference>
<dbReference type="InterPro" id="IPR014031">
    <property type="entry name" value="Ketoacyl_synth_C"/>
</dbReference>
<dbReference type="InterPro" id="IPR014030">
    <property type="entry name" value="Ketoacyl_synth_N"/>
</dbReference>
<dbReference type="InterPro" id="IPR016036">
    <property type="entry name" value="Malonyl_transacylase_ACP-bd"/>
</dbReference>
<dbReference type="InterPro" id="IPR020841">
    <property type="entry name" value="PKS_Beta-ketoAc_synthase_dom"/>
</dbReference>
<dbReference type="InterPro" id="IPR042104">
    <property type="entry name" value="PKS_dehydratase_sf"/>
</dbReference>
<dbReference type="InterPro" id="IPR049900">
    <property type="entry name" value="PKS_mFAS_DH"/>
</dbReference>
<dbReference type="InterPro" id="IPR050091">
    <property type="entry name" value="PKS_NRPS_Biosynth_Enz"/>
</dbReference>
<dbReference type="InterPro" id="IPR020806">
    <property type="entry name" value="PKS_PP-bd"/>
</dbReference>
<dbReference type="InterPro" id="IPR009081">
    <property type="entry name" value="PP-bd_ACP"/>
</dbReference>
<dbReference type="InterPro" id="IPR030918">
    <property type="entry name" value="PT_fungal_PKS"/>
</dbReference>
<dbReference type="InterPro" id="IPR032088">
    <property type="entry name" value="SAT"/>
</dbReference>
<dbReference type="InterPro" id="IPR016039">
    <property type="entry name" value="Thiolase-like"/>
</dbReference>
<dbReference type="NCBIfam" id="TIGR04532">
    <property type="entry name" value="PT_fungal_PKS"/>
    <property type="match status" value="1"/>
</dbReference>
<dbReference type="PANTHER" id="PTHR43775">
    <property type="entry name" value="FATTY ACID SYNTHASE"/>
    <property type="match status" value="1"/>
</dbReference>
<dbReference type="PANTHER" id="PTHR43775:SF37">
    <property type="entry name" value="SI:DKEY-61P9.11"/>
    <property type="match status" value="1"/>
</dbReference>
<dbReference type="Pfam" id="PF00698">
    <property type="entry name" value="Acyl_transf_1"/>
    <property type="match status" value="1"/>
</dbReference>
<dbReference type="Pfam" id="PF22621">
    <property type="entry name" value="CurL-like_PKS_C"/>
    <property type="match status" value="1"/>
</dbReference>
<dbReference type="Pfam" id="PF00109">
    <property type="entry name" value="ketoacyl-synt"/>
    <property type="match status" value="1"/>
</dbReference>
<dbReference type="Pfam" id="PF02801">
    <property type="entry name" value="Ketoacyl-synt_C"/>
    <property type="match status" value="1"/>
</dbReference>
<dbReference type="Pfam" id="PF00550">
    <property type="entry name" value="PP-binding"/>
    <property type="match status" value="1"/>
</dbReference>
<dbReference type="Pfam" id="PF16073">
    <property type="entry name" value="SAT"/>
    <property type="match status" value="1"/>
</dbReference>
<dbReference type="SMART" id="SM00827">
    <property type="entry name" value="PKS_AT"/>
    <property type="match status" value="1"/>
</dbReference>
<dbReference type="SMART" id="SM00825">
    <property type="entry name" value="PKS_KS"/>
    <property type="match status" value="1"/>
</dbReference>
<dbReference type="SMART" id="SM00823">
    <property type="entry name" value="PKS_PP"/>
    <property type="match status" value="1"/>
</dbReference>
<dbReference type="SUPFAM" id="SSF47336">
    <property type="entry name" value="ACP-like"/>
    <property type="match status" value="1"/>
</dbReference>
<dbReference type="SUPFAM" id="SSF52151">
    <property type="entry name" value="FabD/lysophospholipase-like"/>
    <property type="match status" value="1"/>
</dbReference>
<dbReference type="SUPFAM" id="SSF55048">
    <property type="entry name" value="Probable ACP-binding domain of malonyl-CoA ACP transacylase"/>
    <property type="match status" value="1"/>
</dbReference>
<dbReference type="SUPFAM" id="SSF53901">
    <property type="entry name" value="Thiolase-like"/>
    <property type="match status" value="1"/>
</dbReference>
<dbReference type="PROSITE" id="PS50075">
    <property type="entry name" value="CARRIER"/>
    <property type="match status" value="1"/>
</dbReference>
<dbReference type="PROSITE" id="PS52004">
    <property type="entry name" value="KS3_2"/>
    <property type="match status" value="1"/>
</dbReference>
<dbReference type="PROSITE" id="PS52019">
    <property type="entry name" value="PKS_MFAS_DH"/>
    <property type="match status" value="1"/>
</dbReference>